<gene>
    <name type="ordered locus">MG307</name>
</gene>
<comment type="subcellular location">
    <subcellularLocation>
        <location evidence="1">Cell membrane</location>
        <topology evidence="1">Lipid-anchor</topology>
    </subcellularLocation>
</comment>
<comment type="similarity">
    <text evidence="2">Belongs to the MG307/MG309/MG338 family.</text>
</comment>
<proteinExistence type="inferred from homology"/>
<feature type="signal peptide" evidence="1">
    <location>
        <begin position="1"/>
        <end position="26"/>
    </location>
</feature>
<feature type="chain" id="PRO_0000014030" description="Uncharacterized lipoprotein MG307">
    <location>
        <begin position="27"/>
        <end position="1177"/>
    </location>
</feature>
<feature type="lipid moiety-binding region" description="N-palmitoyl cysteine" evidence="1">
    <location>
        <position position="27"/>
    </location>
</feature>
<feature type="lipid moiety-binding region" description="S-diacylglycerol cysteine" evidence="1">
    <location>
        <position position="27"/>
    </location>
</feature>
<protein>
    <recommendedName>
        <fullName>Uncharacterized lipoprotein MG307</fullName>
    </recommendedName>
</protein>
<dbReference type="EMBL" id="L43967">
    <property type="protein sequence ID" value="AAC71529.1"/>
    <property type="molecule type" value="Genomic_DNA"/>
</dbReference>
<dbReference type="EMBL" id="U01767">
    <property type="protein sequence ID" value="AAD10584.1"/>
    <property type="molecule type" value="Genomic_DNA"/>
</dbReference>
<dbReference type="PIR" id="I64233">
    <property type="entry name" value="I64233"/>
</dbReference>
<dbReference type="RefSeq" id="WP_010869421.1">
    <property type="nucleotide sequence ID" value="NC_000908.2"/>
</dbReference>
<dbReference type="STRING" id="243273.MG_307"/>
<dbReference type="GeneID" id="88282470"/>
<dbReference type="KEGG" id="mge:MG_307"/>
<dbReference type="eggNOG" id="ENOG5031Y87">
    <property type="taxonomic scope" value="Bacteria"/>
</dbReference>
<dbReference type="HOGENOM" id="CLU_007912_0_0_14"/>
<dbReference type="InParanoid" id="P47549"/>
<dbReference type="OrthoDB" id="9956930at2"/>
<dbReference type="BioCyc" id="MGEN243273:G1GJ2-376-MONOMER"/>
<dbReference type="Proteomes" id="UP000000807">
    <property type="component" value="Chromosome"/>
</dbReference>
<dbReference type="GO" id="GO:0005886">
    <property type="term" value="C:plasma membrane"/>
    <property type="evidence" value="ECO:0007669"/>
    <property type="project" value="UniProtKB-SubCell"/>
</dbReference>
<dbReference type="InterPro" id="IPR022186">
    <property type="entry name" value="DUF3713"/>
</dbReference>
<dbReference type="Pfam" id="PF12506">
    <property type="entry name" value="DUF3713"/>
    <property type="match status" value="1"/>
</dbReference>
<dbReference type="PROSITE" id="PS51257">
    <property type="entry name" value="PROKAR_LIPOPROTEIN"/>
    <property type="match status" value="1"/>
</dbReference>
<keyword id="KW-1003">Cell membrane</keyword>
<keyword id="KW-0449">Lipoprotein</keyword>
<keyword id="KW-0472">Membrane</keyword>
<keyword id="KW-0564">Palmitate</keyword>
<keyword id="KW-1185">Reference proteome</keyword>
<keyword id="KW-0732">Signal</keyword>
<name>Y307_MYCGE</name>
<sequence length="1177" mass="131882">MKKLLKKSKFWWFLLCGLSVSTILVACSTPTNSALQTVFSPTSTNFFHGQKGSLKEGLITALKTPSANKHFVIGPLLKALEAWYENNEDKAINKFLKDTKKNVDDQYKNTVNGLISPPRNRAVFIQQDLLDKSGGSEASWKSQQLFNQLISDFTAKLFAKDFLVYKPNGQLSTGPYIYDELSQPEKWKDFGFQEPRFSETNDALFAKLQAQIFNLWVEYTDPTLISQATFKYAAPQQGLGQVYNTEKLKDKLTPSYAFPFFPKDGEIPQNQNVGNKRWEQLIEGKDGLNTAKTGLEKYILDQNQGNLIDFPTTLSDNTQTKQIVDSLNIVDQLEAANLGASLNLKLDLLNQDKDQLPTIKELNKELNNTIVVESTKIENHTKSNTLFCEHNTTDSSQNNLKSLIKDAFISSNDSSNLGKLAKQIHQTTTSDMMVSTKASSSTTSSYLVWDAAIPNNKTNNGASTVSANCANATVQNTSHNSNNQLKLRLVRNGEGVAVIGIDGGSYYLTKNSSSKTERDIEKQKQFLMWRAFQAKTNTFKNSLYSFSFPLNETLKTWFEKNQELILVNALINTDFQKKDKGSDAMQKAFNDYKELMQKFAPVALATNVIRDLFLQMDALDNKLTSRTTELNTNVNQINPTPWLNGLSSHLPYVRKSGHYEKLNNYFLFLITKTLWKKVGSEKINISENNNKLKTTKADVDKIRDEILSDINNKVTEFVNQLKVTEKSKPNFSNIILVDINNDQSLTNSANWSLNALLDVTTVNPLSFALLKNAFTSNQQFEKAKKLFEEIKSKNGSSSTSSSSDADSLAKVISNYYYMTWSKLTNKAMYGNPNNGNIDELFKKAFLESVDESGFNVNFKAVIDHYRFIFTLQWLIENNLKNFKDILQANLKYGEIAYIAYDKNIISNNTNNPQGIFGSVFNYENDEHATTANANQTIDPNNFFFKTKTSPNTTPATTMLSTRQAVSTSNNGTYGFTGLNTTNSSMLENNTNQALLNHIAANSLKQYGSKDDLKKFISETKDQLVLDNIARQLSRLTPSSSSSNGKTLSAYFQVDAINNSALDFKAKQALLLAVLDQYSSYFNSSNSPSISKRSTQTNQKFSEFNFGGDSYNYLQFTKSDIDSLSLTSSTNIESDIVAALVLFQASDTGTQQLALSAIEKPQFRIGDKRIQSGLNLLK</sequence>
<evidence type="ECO:0000255" key="1">
    <source>
        <dbReference type="PROSITE-ProRule" id="PRU00303"/>
    </source>
</evidence>
<evidence type="ECO:0000305" key="2"/>
<organism>
    <name type="scientific">Mycoplasma genitalium (strain ATCC 33530 / DSM 19775 / NCTC 10195 / G37)</name>
    <name type="common">Mycoplasmoides genitalium</name>
    <dbReference type="NCBI Taxonomy" id="243273"/>
    <lineage>
        <taxon>Bacteria</taxon>
        <taxon>Bacillati</taxon>
        <taxon>Mycoplasmatota</taxon>
        <taxon>Mycoplasmoidales</taxon>
        <taxon>Mycoplasmoidaceae</taxon>
        <taxon>Mycoplasmoides</taxon>
    </lineage>
</organism>
<reference key="1">
    <citation type="journal article" date="1995" name="Science">
        <title>The minimal gene complement of Mycoplasma genitalium.</title>
        <authorList>
            <person name="Fraser C.M."/>
            <person name="Gocayne J.D."/>
            <person name="White O."/>
            <person name="Adams M.D."/>
            <person name="Clayton R.A."/>
            <person name="Fleischmann R.D."/>
            <person name="Bult C.J."/>
            <person name="Kerlavage A.R."/>
            <person name="Sutton G.G."/>
            <person name="Kelley J.M."/>
            <person name="Fritchman J.L."/>
            <person name="Weidman J.F."/>
            <person name="Small K.V."/>
            <person name="Sandusky M."/>
            <person name="Fuhrmann J.L."/>
            <person name="Nguyen D.T."/>
            <person name="Utterback T.R."/>
            <person name="Saudek D.M."/>
            <person name="Phillips C.A."/>
            <person name="Merrick J.M."/>
            <person name="Tomb J.-F."/>
            <person name="Dougherty B.A."/>
            <person name="Bott K.F."/>
            <person name="Hu P.-C."/>
            <person name="Lucier T.S."/>
            <person name="Peterson S.N."/>
            <person name="Smith H.O."/>
            <person name="Hutchison C.A. III"/>
            <person name="Venter J.C."/>
        </authorList>
    </citation>
    <scope>NUCLEOTIDE SEQUENCE [LARGE SCALE GENOMIC DNA]</scope>
    <source>
        <strain>ATCC 33530 / DSM 19775 / NCTC 10195 / G37</strain>
    </source>
</reference>
<reference key="2">
    <citation type="journal article" date="1993" name="J. Bacteriol.">
        <title>A survey of the Mycoplasma genitalium genome by using random sequencing.</title>
        <authorList>
            <person name="Peterson S.N."/>
            <person name="Hu P.-C."/>
            <person name="Bott K.F."/>
            <person name="Hutchison C.A. III"/>
        </authorList>
    </citation>
    <scope>NUCLEOTIDE SEQUENCE [GENOMIC DNA] OF 682-1058</scope>
    <source>
        <strain>ATCC 33530 / DSM 19775 / NCTC 10195 / G37</strain>
    </source>
</reference>
<accession>P47549</accession>